<reference key="1">
    <citation type="journal article" date="1999" name="Gene">
        <title>Identification of four novel ADAMs with potential roles in spermatogenesis and fertilization.</title>
        <authorList>
            <person name="Zhu G.-Z."/>
            <person name="Lin Y."/>
            <person name="Myles D.G."/>
            <person name="Primakoff P."/>
        </authorList>
    </citation>
    <scope>NUCLEOTIDE SEQUENCE [MRNA]</scope>
    <scope>TISSUE SPECIFICITY</scope>
    <scope>DEVELOPMENTAL STAGE</scope>
    <source>
        <tissue>Testis</tissue>
    </source>
</reference>
<reference key="2">
    <citation type="journal article" date="2009" name="PLoS Biol.">
        <title>Lineage-specific biology revealed by a finished genome assembly of the mouse.</title>
        <authorList>
            <person name="Church D.M."/>
            <person name="Goodstadt L."/>
            <person name="Hillier L.W."/>
            <person name="Zody M.C."/>
            <person name="Goldstein S."/>
            <person name="She X."/>
            <person name="Bult C.J."/>
            <person name="Agarwala R."/>
            <person name="Cherry J.L."/>
            <person name="DiCuccio M."/>
            <person name="Hlavina W."/>
            <person name="Kapustin Y."/>
            <person name="Meric P."/>
            <person name="Maglott D."/>
            <person name="Birtle Z."/>
            <person name="Marques A.C."/>
            <person name="Graves T."/>
            <person name="Zhou S."/>
            <person name="Teague B."/>
            <person name="Potamousis K."/>
            <person name="Churas C."/>
            <person name="Place M."/>
            <person name="Herschleb J."/>
            <person name="Runnheim R."/>
            <person name="Forrest D."/>
            <person name="Amos-Landgraf J."/>
            <person name="Schwartz D.C."/>
            <person name="Cheng Z."/>
            <person name="Lindblad-Toh K."/>
            <person name="Eichler E.E."/>
            <person name="Ponting C.P."/>
        </authorList>
    </citation>
    <scope>NUCLEOTIDE SEQUENCE [LARGE SCALE GENOMIC DNA]</scope>
    <source>
        <strain>C57BL/6J</strain>
    </source>
</reference>
<reference key="3">
    <citation type="submission" date="2005-07" db="EMBL/GenBank/DDBJ databases">
        <authorList>
            <person name="Mural R.J."/>
            <person name="Adams M.D."/>
            <person name="Myers E.W."/>
            <person name="Smith H.O."/>
            <person name="Venter J.C."/>
        </authorList>
    </citation>
    <scope>NUCLEOTIDE SEQUENCE [LARGE SCALE GENOMIC DNA]</scope>
</reference>
<reference key="4">
    <citation type="journal article" date="2011" name="J. Cell. Physiol.">
        <title>Identification of heat shock protein 5, calnexin and integral membrane protein 2B as Adam7-interacting membrane proteins in mouse sperm.</title>
        <authorList>
            <person name="Han C."/>
            <person name="Park I."/>
            <person name="Lee B."/>
            <person name="Jin S."/>
            <person name="Choi H."/>
            <person name="Kwon J.T."/>
            <person name="Kwon Y.I."/>
            <person name="Kim D.H."/>
            <person name="Park Z.Y."/>
            <person name="Cho C."/>
        </authorList>
    </citation>
    <scope>TISSUE SPECIFICITY</scope>
</reference>
<protein>
    <recommendedName>
        <fullName evidence="10">Disintegrin and metalloproteinase domain-containing protein 26A</fullName>
        <shortName>ADAM 26A</shortName>
        <ecNumber>3.4.24.-</ecNumber>
    </recommendedName>
    <alternativeName>
        <fullName evidence="8">Testase-3</fullName>
    </alternativeName>
</protein>
<dbReference type="EC" id="3.4.24.-"/>
<dbReference type="EMBL" id="AF167404">
    <property type="protein sequence ID" value="AAD48843.1"/>
    <property type="molecule type" value="mRNA"/>
</dbReference>
<dbReference type="EMBL" id="AC131115">
    <property type="status" value="NOT_ANNOTATED_CDS"/>
    <property type="molecule type" value="Genomic_DNA"/>
</dbReference>
<dbReference type="EMBL" id="CH466554">
    <property type="protein sequence ID" value="EDL35532.1"/>
    <property type="molecule type" value="Genomic_DNA"/>
</dbReference>
<dbReference type="CCDS" id="CCDS22269.1"/>
<dbReference type="RefSeq" id="NP_034215.2">
    <property type="nucleotide sequence ID" value="NM_010085.3"/>
</dbReference>
<dbReference type="SMR" id="Q9R158"/>
<dbReference type="BioGRID" id="199332">
    <property type="interactions" value="8"/>
</dbReference>
<dbReference type="FunCoup" id="Q9R158">
    <property type="interactions" value="13"/>
</dbReference>
<dbReference type="STRING" id="10090.ENSMUSP00000058256"/>
<dbReference type="MEROPS" id="M12.229"/>
<dbReference type="GlyCosmos" id="Q9R158">
    <property type="glycosylation" value="8 sites, No reported glycans"/>
</dbReference>
<dbReference type="GlyGen" id="Q9R158">
    <property type="glycosylation" value="9 sites"/>
</dbReference>
<dbReference type="PaxDb" id="10090-ENSMUSP00000058256"/>
<dbReference type="ProteomicsDB" id="281935"/>
<dbReference type="DNASU" id="13525"/>
<dbReference type="Ensembl" id="ENSMUST00000049577.3">
    <property type="protein sequence ID" value="ENSMUSP00000058256.3"/>
    <property type="gene ID" value="ENSMUSG00000048516.3"/>
</dbReference>
<dbReference type="GeneID" id="13525"/>
<dbReference type="KEGG" id="mmu:13525"/>
<dbReference type="UCSC" id="uc009lof.1">
    <property type="organism name" value="mouse"/>
</dbReference>
<dbReference type="AGR" id="MGI:105985"/>
<dbReference type="CTD" id="13525"/>
<dbReference type="MGI" id="MGI:105985">
    <property type="gene designation" value="Adam26a"/>
</dbReference>
<dbReference type="VEuPathDB" id="HostDB:ENSMUSG00000048516"/>
<dbReference type="eggNOG" id="KOG3607">
    <property type="taxonomic scope" value="Eukaryota"/>
</dbReference>
<dbReference type="GeneTree" id="ENSGT00940000162672"/>
<dbReference type="HOGENOM" id="CLU_012714_4_0_1"/>
<dbReference type="InParanoid" id="Q9R158"/>
<dbReference type="OMA" id="NCSYHKY"/>
<dbReference type="OrthoDB" id="5951731at2759"/>
<dbReference type="PhylomeDB" id="Q9R158"/>
<dbReference type="TreeFam" id="TF314733"/>
<dbReference type="BioGRID-ORCS" id="13525">
    <property type="hits" value="1 hit in 76 CRISPR screens"/>
</dbReference>
<dbReference type="PRO" id="PR:Q9R158"/>
<dbReference type="Proteomes" id="UP000000589">
    <property type="component" value="Chromosome 8"/>
</dbReference>
<dbReference type="RNAct" id="Q9R158">
    <property type="molecule type" value="protein"/>
</dbReference>
<dbReference type="Bgee" id="ENSMUSG00000048516">
    <property type="expression patterns" value="Expressed in spermatid and 13 other cell types or tissues"/>
</dbReference>
<dbReference type="GO" id="GO:0009897">
    <property type="term" value="C:external side of plasma membrane"/>
    <property type="evidence" value="ECO:0000314"/>
    <property type="project" value="MGI"/>
</dbReference>
<dbReference type="GO" id="GO:1990913">
    <property type="term" value="C:sperm head plasma membrane"/>
    <property type="evidence" value="ECO:0000314"/>
    <property type="project" value="MGI"/>
</dbReference>
<dbReference type="GO" id="GO:0005178">
    <property type="term" value="F:integrin binding"/>
    <property type="evidence" value="ECO:0000250"/>
    <property type="project" value="MGI"/>
</dbReference>
<dbReference type="GO" id="GO:0046872">
    <property type="term" value="F:metal ion binding"/>
    <property type="evidence" value="ECO:0007669"/>
    <property type="project" value="UniProtKB-KW"/>
</dbReference>
<dbReference type="GO" id="GO:0004222">
    <property type="term" value="F:metalloendopeptidase activity"/>
    <property type="evidence" value="ECO:0007669"/>
    <property type="project" value="InterPro"/>
</dbReference>
<dbReference type="GO" id="GO:0008237">
    <property type="term" value="F:metallopeptidase activity"/>
    <property type="evidence" value="ECO:0000250"/>
    <property type="project" value="MGI"/>
</dbReference>
<dbReference type="GO" id="GO:0030154">
    <property type="term" value="P:cell differentiation"/>
    <property type="evidence" value="ECO:0007669"/>
    <property type="project" value="UniProtKB-KW"/>
</dbReference>
<dbReference type="GO" id="GO:0006508">
    <property type="term" value="P:proteolysis"/>
    <property type="evidence" value="ECO:0007669"/>
    <property type="project" value="UniProtKB-KW"/>
</dbReference>
<dbReference type="GO" id="GO:0007283">
    <property type="term" value="P:spermatogenesis"/>
    <property type="evidence" value="ECO:0007669"/>
    <property type="project" value="UniProtKB-KW"/>
</dbReference>
<dbReference type="CDD" id="cd04269">
    <property type="entry name" value="ZnMc_adamalysin_II_like"/>
    <property type="match status" value="1"/>
</dbReference>
<dbReference type="FunFam" id="3.40.390.10:FF:000002">
    <property type="entry name" value="Disintegrin and metalloproteinase domain-containing protein 22"/>
    <property type="match status" value="1"/>
</dbReference>
<dbReference type="FunFam" id="4.10.70.10:FF:000001">
    <property type="entry name" value="Disintegrin and metalloproteinase domain-containing protein 22"/>
    <property type="match status" value="1"/>
</dbReference>
<dbReference type="Gene3D" id="3.40.390.10">
    <property type="entry name" value="Collagenase (Catalytic Domain)"/>
    <property type="match status" value="1"/>
</dbReference>
<dbReference type="Gene3D" id="4.10.70.10">
    <property type="entry name" value="Disintegrin domain"/>
    <property type="match status" value="1"/>
</dbReference>
<dbReference type="InterPro" id="IPR006586">
    <property type="entry name" value="ADAM_Cys-rich"/>
</dbReference>
<dbReference type="InterPro" id="IPR018358">
    <property type="entry name" value="Disintegrin_CS"/>
</dbReference>
<dbReference type="InterPro" id="IPR001762">
    <property type="entry name" value="Disintegrin_dom"/>
</dbReference>
<dbReference type="InterPro" id="IPR036436">
    <property type="entry name" value="Disintegrin_dom_sf"/>
</dbReference>
<dbReference type="InterPro" id="IPR024079">
    <property type="entry name" value="MetalloPept_cat_dom_sf"/>
</dbReference>
<dbReference type="InterPro" id="IPR001590">
    <property type="entry name" value="Peptidase_M12B"/>
</dbReference>
<dbReference type="InterPro" id="IPR002870">
    <property type="entry name" value="Peptidase_M12B_N"/>
</dbReference>
<dbReference type="InterPro" id="IPR034027">
    <property type="entry name" value="Reprolysin_adamalysin"/>
</dbReference>
<dbReference type="PANTHER" id="PTHR11905:SF239">
    <property type="entry name" value="A DISINTEGRIN AND METALLOPEPTIDASE DOMAIN 26B-RELATED"/>
    <property type="match status" value="1"/>
</dbReference>
<dbReference type="PANTHER" id="PTHR11905">
    <property type="entry name" value="ADAM A DISINTEGRIN AND METALLOPROTEASE DOMAIN"/>
    <property type="match status" value="1"/>
</dbReference>
<dbReference type="Pfam" id="PF08516">
    <property type="entry name" value="ADAM_CR"/>
    <property type="match status" value="1"/>
</dbReference>
<dbReference type="Pfam" id="PF00200">
    <property type="entry name" value="Disintegrin"/>
    <property type="match status" value="1"/>
</dbReference>
<dbReference type="Pfam" id="PF01562">
    <property type="entry name" value="Pep_M12B_propep"/>
    <property type="match status" value="1"/>
</dbReference>
<dbReference type="Pfam" id="PF01421">
    <property type="entry name" value="Reprolysin"/>
    <property type="match status" value="1"/>
</dbReference>
<dbReference type="PRINTS" id="PR00289">
    <property type="entry name" value="DISINTEGRIN"/>
</dbReference>
<dbReference type="SMART" id="SM00608">
    <property type="entry name" value="ACR"/>
    <property type="match status" value="1"/>
</dbReference>
<dbReference type="SMART" id="SM00050">
    <property type="entry name" value="DISIN"/>
    <property type="match status" value="1"/>
</dbReference>
<dbReference type="SUPFAM" id="SSF57552">
    <property type="entry name" value="Blood coagulation inhibitor (disintegrin)"/>
    <property type="match status" value="1"/>
</dbReference>
<dbReference type="SUPFAM" id="SSF55486">
    <property type="entry name" value="Metalloproteases ('zincins'), catalytic domain"/>
    <property type="match status" value="1"/>
</dbReference>
<dbReference type="PROSITE" id="PS50215">
    <property type="entry name" value="ADAM_MEPRO"/>
    <property type="match status" value="1"/>
</dbReference>
<dbReference type="PROSITE" id="PS00427">
    <property type="entry name" value="DISINTEGRIN_1"/>
    <property type="match status" value="1"/>
</dbReference>
<dbReference type="PROSITE" id="PS50214">
    <property type="entry name" value="DISINTEGRIN_2"/>
    <property type="match status" value="1"/>
</dbReference>
<dbReference type="PROSITE" id="PS00142">
    <property type="entry name" value="ZINC_PROTEASE"/>
    <property type="match status" value="1"/>
</dbReference>
<keyword id="KW-0217">Developmental protein</keyword>
<keyword id="KW-0221">Differentiation</keyword>
<keyword id="KW-1015">Disulfide bond</keyword>
<keyword id="KW-0245">EGF-like domain</keyword>
<keyword id="KW-0325">Glycoprotein</keyword>
<keyword id="KW-0378">Hydrolase</keyword>
<keyword id="KW-0472">Membrane</keyword>
<keyword id="KW-0479">Metal-binding</keyword>
<keyword id="KW-0482">Metalloprotease</keyword>
<keyword id="KW-0645">Protease</keyword>
<keyword id="KW-1185">Reference proteome</keyword>
<keyword id="KW-0732">Signal</keyword>
<keyword id="KW-0744">Spermatogenesis</keyword>
<keyword id="KW-0812">Transmembrane</keyword>
<keyword id="KW-1133">Transmembrane helix</keyword>
<keyword id="KW-0862">Zinc</keyword>
<keyword id="KW-0865">Zymogen</keyword>
<sequence>MFLKFCLWTMFFFSAWSPIGHAKYSSLLEVVTPLRVTVTRGNNISPGWLSYSLNIGGQRHIITMKPKKNLISRNFLLFTYSDQGDLLEQHHFVQNDCYYHGYVDEDLESPVIVNTCFGSLQGTLEINGTSYEIMPKSSTSTFEHLVYKMDSGDSESSPMRCGLSEEETAQQTKLQESNAPTLLQIPYENWWTHHRFIEYFVVLDHKQYVHRNNNITTCIQDMLQIVNGVNGYYLQIDTDVVLTTLEVWNEKNYINVELSIFKVLGDFCTWKQNMFGNRIRHDIIHLLVRQGYGLYLGLAYLADVCTPYNCGVSSVLSDVMSDMAHIVAHEMGHNFGMKHDGIGCTCGLKDCLMAPYKTNSPKFSNCSYEEMYSVVTKRSCLYDIPEALVTNLTVCGNKVVEEGEQCDCGNSESCLQDPCCSSDCVLKPGAQCAFGLCCKNCQFLKAGTVCRKEKNECDLPEWCNGTSAECPGDVYKADGIPCSGEGYCYKMECHQRDEQCRKIFGNGSRSADEICYMEMNRQGDRFGNCGNDSSTYRTCQIADVLCGQIQCENVIQLPQRRNHETVHYTHFSNITCWTMDYHFGITIDDIGAVSDGTAYAPDHICVDRKCVSKSVLVSNCSPQLYHMQGICNNKQHCHCGVTWKPPDCQKRGHGGSIDSGPPPLPLSHSKWIVYILIVLDVCIVIIIYLFSFYKLSK</sequence>
<evidence type="ECO:0000250" key="1"/>
<evidence type="ECO:0000255" key="2"/>
<evidence type="ECO:0000255" key="3">
    <source>
        <dbReference type="PROSITE-ProRule" id="PRU00068"/>
    </source>
</evidence>
<evidence type="ECO:0000255" key="4">
    <source>
        <dbReference type="PROSITE-ProRule" id="PRU00276"/>
    </source>
</evidence>
<evidence type="ECO:0000255" key="5">
    <source>
        <dbReference type="PROSITE-ProRule" id="PRU10095"/>
    </source>
</evidence>
<evidence type="ECO:0000269" key="6">
    <source>
    </source>
</evidence>
<evidence type="ECO:0000269" key="7">
    <source>
    </source>
</evidence>
<evidence type="ECO:0000303" key="8">
    <source>
    </source>
</evidence>
<evidence type="ECO:0000305" key="9"/>
<evidence type="ECO:0000312" key="10">
    <source>
        <dbReference type="MGI" id="MGI:105985"/>
    </source>
</evidence>
<accession>Q9R158</accession>
<accession>G3X9D0</accession>
<feature type="signal peptide" evidence="2">
    <location>
        <begin position="1"/>
        <end position="22"/>
    </location>
</feature>
<feature type="propeptide" id="PRO_0000029126" evidence="1">
    <location>
        <begin position="23"/>
        <end position="187"/>
    </location>
</feature>
<feature type="chain" id="PRO_0000029127" description="Disintegrin and metalloproteinase domain-containing protein 26A">
    <location>
        <begin position="188"/>
        <end position="697"/>
    </location>
</feature>
<feature type="topological domain" description="Extracellular" evidence="2">
    <location>
        <begin position="188"/>
        <end position="671"/>
    </location>
</feature>
<feature type="transmembrane region" description="Helical" evidence="2">
    <location>
        <begin position="672"/>
        <end position="692"/>
    </location>
</feature>
<feature type="topological domain" description="Cytoplasmic" evidence="2">
    <location>
        <begin position="693"/>
        <end position="697"/>
    </location>
</feature>
<feature type="domain" description="Peptidase M12B" evidence="4">
    <location>
        <begin position="195"/>
        <end position="385"/>
    </location>
</feature>
<feature type="domain" description="Disintegrin" evidence="3">
    <location>
        <begin position="392"/>
        <end position="478"/>
    </location>
</feature>
<feature type="domain" description="EGF-like">
    <location>
        <begin position="616"/>
        <end position="649"/>
    </location>
</feature>
<feature type="short sequence motif" description="Cysteine switch" evidence="1">
    <location>
        <begin position="159"/>
        <end position="166"/>
    </location>
</feature>
<feature type="active site" evidence="4 5">
    <location>
        <position position="330"/>
    </location>
</feature>
<feature type="binding site" description="in inhibited form" evidence="1">
    <location>
        <position position="161"/>
    </location>
    <ligand>
        <name>Zn(2+)</name>
        <dbReference type="ChEBI" id="CHEBI:29105"/>
        <note>catalytic</note>
    </ligand>
</feature>
<feature type="binding site" evidence="1">
    <location>
        <position position="329"/>
    </location>
    <ligand>
        <name>Zn(2+)</name>
        <dbReference type="ChEBI" id="CHEBI:29105"/>
        <note>catalytic</note>
    </ligand>
</feature>
<feature type="binding site" evidence="1">
    <location>
        <position position="333"/>
    </location>
    <ligand>
        <name>Zn(2+)</name>
        <dbReference type="ChEBI" id="CHEBI:29105"/>
        <note>catalytic</note>
    </ligand>
</feature>
<feature type="binding site" evidence="1">
    <location>
        <position position="339"/>
    </location>
    <ligand>
        <name>Zn(2+)</name>
        <dbReference type="ChEBI" id="CHEBI:29105"/>
        <note>catalytic</note>
    </ligand>
</feature>
<feature type="glycosylation site" description="N-linked (GlcNAc...) asparagine" evidence="2">
    <location>
        <position position="127"/>
    </location>
</feature>
<feature type="glycosylation site" description="N-linked (GlcNAc...) asparagine" evidence="2">
    <location>
        <position position="214"/>
    </location>
</feature>
<feature type="glycosylation site" description="N-linked (GlcNAc...) asparagine" evidence="2">
    <location>
        <position position="365"/>
    </location>
</feature>
<feature type="glycosylation site" description="N-linked (GlcNAc...) asparagine" evidence="2">
    <location>
        <position position="391"/>
    </location>
</feature>
<feature type="glycosylation site" description="N-linked (GlcNAc...) asparagine" evidence="2">
    <location>
        <position position="464"/>
    </location>
</feature>
<feature type="glycosylation site" description="N-linked (GlcNAc...) asparagine" evidence="2">
    <location>
        <position position="506"/>
    </location>
</feature>
<feature type="glycosylation site" description="N-linked (GlcNAc...) asparagine" evidence="2">
    <location>
        <position position="531"/>
    </location>
</feature>
<feature type="glycosylation site" description="N-linked (GlcNAc...) asparagine" evidence="2">
    <location>
        <position position="573"/>
    </location>
</feature>
<feature type="disulfide bond" evidence="1">
    <location>
        <begin position="305"/>
        <end position="380"/>
    </location>
</feature>
<feature type="disulfide bond" evidence="1">
    <location>
        <begin position="344"/>
        <end position="366"/>
    </location>
</feature>
<feature type="disulfide bond" evidence="1">
    <location>
        <begin position="346"/>
        <end position="351"/>
    </location>
</feature>
<feature type="disulfide bond" evidence="1">
    <location>
        <begin position="450"/>
        <end position="470"/>
    </location>
</feature>
<feature type="disulfide bond" evidence="1">
    <location>
        <begin position="620"/>
        <end position="631"/>
    </location>
</feature>
<feature type="disulfide bond" evidence="1">
    <location>
        <begin position="639"/>
        <end position="648"/>
    </location>
</feature>
<feature type="sequence conflict" description="In Ref. 1; AAD48843." evidence="9" ref="1">
    <original>W</original>
    <variation>R</variation>
    <location>
        <position position="48"/>
    </location>
</feature>
<feature type="sequence conflict" description="In Ref. 1; AAD48843." evidence="9" ref="1">
    <original>A</original>
    <variation>T</variation>
    <location>
        <position position="446"/>
    </location>
</feature>
<feature type="sequence conflict" description="In Ref. 1; AAD48843." evidence="9" ref="1">
    <original>K</original>
    <variation>E</variation>
    <location>
        <position position="452"/>
    </location>
</feature>
<name>AD26A_MOUSE</name>
<gene>
    <name evidence="10" type="primary">Adam26a</name>
    <name type="synonym">Adam26</name>
</gene>
<organism>
    <name type="scientific">Mus musculus</name>
    <name type="common">Mouse</name>
    <dbReference type="NCBI Taxonomy" id="10090"/>
    <lineage>
        <taxon>Eukaryota</taxon>
        <taxon>Metazoa</taxon>
        <taxon>Chordata</taxon>
        <taxon>Craniata</taxon>
        <taxon>Vertebrata</taxon>
        <taxon>Euteleostomi</taxon>
        <taxon>Mammalia</taxon>
        <taxon>Eutheria</taxon>
        <taxon>Euarchontoglires</taxon>
        <taxon>Glires</taxon>
        <taxon>Rodentia</taxon>
        <taxon>Myomorpha</taxon>
        <taxon>Muroidea</taxon>
        <taxon>Muridae</taxon>
        <taxon>Murinae</taxon>
        <taxon>Mus</taxon>
        <taxon>Mus</taxon>
    </lineage>
</organism>
<proteinExistence type="evidence at protein level"/>
<comment type="function">
    <text>Sperm surface membrane protein that may be involved in spermatogenesis and fertilization.</text>
</comment>
<comment type="cofactor">
    <cofactor evidence="1">
        <name>Zn(2+)</name>
        <dbReference type="ChEBI" id="CHEBI:29105"/>
    </cofactor>
    <text evidence="1">Binds 1 zinc ion per subunit.</text>
</comment>
<comment type="subcellular location">
    <subcellularLocation>
        <location>Membrane</location>
        <topology>Single-pass type I membrane protein</topology>
    </subcellularLocation>
</comment>
<comment type="tissue specificity">
    <text evidence="6 7">Expressed in sperm (at protein level) (PubMed:20945367). Expressed specifically in testis (PubMed:10395895).</text>
</comment>
<comment type="developmental stage">
    <text evidence="6">Adult expression levels are reached by day 25 after birth.</text>
</comment>
<comment type="domain">
    <text>The conserved cysteine present in the cysteine-switch motif binds the catalytic zinc ion, thus inhibiting the enzyme. The dissociation of the cysteine from the zinc ion upon the activation-peptide release activates the enzyme.</text>
</comment>